<dbReference type="EMBL" id="AP006627">
    <property type="protein sequence ID" value="BAD65056.1"/>
    <property type="molecule type" value="Genomic_DNA"/>
</dbReference>
<dbReference type="RefSeq" id="WP_011247364.1">
    <property type="nucleotide sequence ID" value="NC_006582.1"/>
</dbReference>
<dbReference type="STRING" id="66692.ABC2521"/>
<dbReference type="KEGG" id="bcl:ABC2521"/>
<dbReference type="eggNOG" id="ENOG5032YMN">
    <property type="taxonomic scope" value="Bacteria"/>
</dbReference>
<dbReference type="HOGENOM" id="CLU_142282_0_0_9"/>
<dbReference type="OrthoDB" id="2966478at2"/>
<dbReference type="Proteomes" id="UP000001168">
    <property type="component" value="Chromosome"/>
</dbReference>
<dbReference type="HAMAP" id="MF_01861">
    <property type="entry name" value="UPF0738"/>
    <property type="match status" value="1"/>
</dbReference>
<dbReference type="InterPro" id="IPR020908">
    <property type="entry name" value="UPF0738"/>
</dbReference>
<dbReference type="Pfam" id="PF19785">
    <property type="entry name" value="UPF0738"/>
    <property type="match status" value="1"/>
</dbReference>
<feature type="chain" id="PRO_0000369646" description="UPF0738 protein ABC2521">
    <location>
        <begin position="1"/>
        <end position="124"/>
    </location>
</feature>
<accession>Q5WF04</accession>
<protein>
    <recommendedName>
        <fullName evidence="1">UPF0738 protein ABC2521</fullName>
    </recommendedName>
</protein>
<reference key="1">
    <citation type="submission" date="2003-10" db="EMBL/GenBank/DDBJ databases">
        <title>The complete genome sequence of the alkaliphilic Bacillus clausii KSM-K16.</title>
        <authorList>
            <person name="Takaki Y."/>
            <person name="Kageyama Y."/>
            <person name="Shimamura S."/>
            <person name="Suzuki H."/>
            <person name="Nishi S."/>
            <person name="Hatada Y."/>
            <person name="Kawai S."/>
            <person name="Ito S."/>
            <person name="Horikoshi K."/>
        </authorList>
    </citation>
    <scope>NUCLEOTIDE SEQUENCE [LARGE SCALE GENOMIC DNA]</scope>
    <source>
        <strain>KSM-K16</strain>
    </source>
</reference>
<sequence>MKQYKVSAIEVDEEASTVELEEEIDAQLAARLKPGKRVLVDSDQYAFIYILEDEEAFYAIRFEKNVWPALNEAHKLKTSYYVKLNEHTRLALVDMEEELVFLLENIRGNGNYGEAFEQAVNDAF</sequence>
<name>Y2521_SHOC1</name>
<comment type="similarity">
    <text evidence="1">Belongs to the UPF0738 family.</text>
</comment>
<keyword id="KW-1185">Reference proteome</keyword>
<proteinExistence type="inferred from homology"/>
<gene>
    <name type="ordered locus">ABC2521</name>
</gene>
<evidence type="ECO:0000255" key="1">
    <source>
        <dbReference type="HAMAP-Rule" id="MF_01861"/>
    </source>
</evidence>
<organism>
    <name type="scientific">Shouchella clausii (strain KSM-K16)</name>
    <name type="common">Alkalihalobacillus clausii</name>
    <dbReference type="NCBI Taxonomy" id="66692"/>
    <lineage>
        <taxon>Bacteria</taxon>
        <taxon>Bacillati</taxon>
        <taxon>Bacillota</taxon>
        <taxon>Bacilli</taxon>
        <taxon>Bacillales</taxon>
        <taxon>Bacillaceae</taxon>
        <taxon>Shouchella</taxon>
    </lineage>
</organism>